<sequence>MTAWVGLTGGIGSGKSAAAQYFADLRVPRIDADRAAHSLTASDGIALPEIRRLFGDTVFDTQGLLRRDILRKEIFASPSRKALLESVMLPLIFSEIKKQQETFTDAVYGIVEIPLLTEKRQFISLIRRVLTISAPLEKRIGRVMARSGLTRGEVADIISHQASESERLLLADDVLLNDGSLKSLREKTMLLHAFYSGIFASKPTQGKHNG</sequence>
<organism>
    <name type="scientific">Neisseria gonorrhoeae</name>
    <dbReference type="NCBI Taxonomy" id="485"/>
    <lineage>
        <taxon>Bacteria</taxon>
        <taxon>Pseudomonadati</taxon>
        <taxon>Pseudomonadota</taxon>
        <taxon>Betaproteobacteria</taxon>
        <taxon>Neisseriales</taxon>
        <taxon>Neisseriaceae</taxon>
        <taxon>Neisseria</taxon>
    </lineage>
</organism>
<accession>Q50962</accession>
<dbReference type="EC" id="2.7.1.24" evidence="1"/>
<dbReference type="EMBL" id="U32588">
    <property type="protein sequence ID" value="AAC43467.1"/>
    <property type="status" value="ALT_INIT"/>
    <property type="molecule type" value="Genomic_DNA"/>
</dbReference>
<dbReference type="PIR" id="S77586">
    <property type="entry name" value="S77586"/>
</dbReference>
<dbReference type="SMR" id="Q50962"/>
<dbReference type="UniPathway" id="UPA00241">
    <property type="reaction ID" value="UER00356"/>
</dbReference>
<dbReference type="GO" id="GO:0005737">
    <property type="term" value="C:cytoplasm"/>
    <property type="evidence" value="ECO:0007669"/>
    <property type="project" value="UniProtKB-SubCell"/>
</dbReference>
<dbReference type="GO" id="GO:0005524">
    <property type="term" value="F:ATP binding"/>
    <property type="evidence" value="ECO:0007669"/>
    <property type="project" value="UniProtKB-UniRule"/>
</dbReference>
<dbReference type="GO" id="GO:0004140">
    <property type="term" value="F:dephospho-CoA kinase activity"/>
    <property type="evidence" value="ECO:0007669"/>
    <property type="project" value="UniProtKB-UniRule"/>
</dbReference>
<dbReference type="GO" id="GO:0015937">
    <property type="term" value="P:coenzyme A biosynthetic process"/>
    <property type="evidence" value="ECO:0007669"/>
    <property type="project" value="UniProtKB-UniRule"/>
</dbReference>
<dbReference type="CDD" id="cd02022">
    <property type="entry name" value="DPCK"/>
    <property type="match status" value="1"/>
</dbReference>
<dbReference type="FunFam" id="3.40.50.300:FF:002756">
    <property type="entry name" value="Dephospho-CoA kinase"/>
    <property type="match status" value="1"/>
</dbReference>
<dbReference type="Gene3D" id="3.40.50.300">
    <property type="entry name" value="P-loop containing nucleotide triphosphate hydrolases"/>
    <property type="match status" value="1"/>
</dbReference>
<dbReference type="HAMAP" id="MF_00376">
    <property type="entry name" value="Dephospho_CoA_kinase"/>
    <property type="match status" value="1"/>
</dbReference>
<dbReference type="InterPro" id="IPR001977">
    <property type="entry name" value="Depp_CoAkinase"/>
</dbReference>
<dbReference type="InterPro" id="IPR027417">
    <property type="entry name" value="P-loop_NTPase"/>
</dbReference>
<dbReference type="NCBIfam" id="TIGR00152">
    <property type="entry name" value="dephospho-CoA kinase"/>
    <property type="match status" value="1"/>
</dbReference>
<dbReference type="PANTHER" id="PTHR10695:SF46">
    <property type="entry name" value="BIFUNCTIONAL COENZYME A SYNTHASE-RELATED"/>
    <property type="match status" value="1"/>
</dbReference>
<dbReference type="PANTHER" id="PTHR10695">
    <property type="entry name" value="DEPHOSPHO-COA KINASE-RELATED"/>
    <property type="match status" value="1"/>
</dbReference>
<dbReference type="Pfam" id="PF01121">
    <property type="entry name" value="CoaE"/>
    <property type="match status" value="1"/>
</dbReference>
<dbReference type="SUPFAM" id="SSF52540">
    <property type="entry name" value="P-loop containing nucleoside triphosphate hydrolases"/>
    <property type="match status" value="1"/>
</dbReference>
<dbReference type="PROSITE" id="PS51219">
    <property type="entry name" value="DPCK"/>
    <property type="match status" value="1"/>
</dbReference>
<proteinExistence type="inferred from homology"/>
<name>COAE_NEIGO</name>
<protein>
    <recommendedName>
        <fullName evidence="1">Dephospho-CoA kinase</fullName>
        <ecNumber evidence="1">2.7.1.24</ecNumber>
    </recommendedName>
    <alternativeName>
        <fullName evidence="1">Dephosphocoenzyme A kinase</fullName>
    </alternativeName>
</protein>
<keyword id="KW-0067">ATP-binding</keyword>
<keyword id="KW-0173">Coenzyme A biosynthesis</keyword>
<keyword id="KW-0963">Cytoplasm</keyword>
<keyword id="KW-0418">Kinase</keyword>
<keyword id="KW-0547">Nucleotide-binding</keyword>
<keyword id="KW-0808">Transferase</keyword>
<gene>
    <name evidence="1" type="primary">coaE</name>
</gene>
<feature type="chain" id="PRO_0000172966" description="Dephospho-CoA kinase">
    <location>
        <begin position="1"/>
        <end position="210"/>
    </location>
</feature>
<feature type="domain" description="DPCK" evidence="1">
    <location>
        <begin position="4"/>
        <end position="202"/>
    </location>
</feature>
<feature type="binding site" evidence="1">
    <location>
        <begin position="12"/>
        <end position="17"/>
    </location>
    <ligand>
        <name>ATP</name>
        <dbReference type="ChEBI" id="CHEBI:30616"/>
    </ligand>
</feature>
<reference key="1">
    <citation type="journal article" date="1995" name="Mol. Microbiol.">
        <title>Characterization of the pilF-pilD pilus-assembly locus of Neisseria gonorrhoeae.</title>
        <authorList>
            <person name="Freitag N.E."/>
            <person name="Seifert H.S."/>
            <person name="Koomey M."/>
        </authorList>
    </citation>
    <scope>NUCLEOTIDE SEQUENCE [GENOMIC DNA]</scope>
    <source>
        <strain>MS11</strain>
    </source>
</reference>
<comment type="function">
    <text evidence="1">Catalyzes the phosphorylation of the 3'-hydroxyl group of dephosphocoenzyme A to form coenzyme A.</text>
</comment>
<comment type="catalytic activity">
    <reaction evidence="1">
        <text>3'-dephospho-CoA + ATP = ADP + CoA + H(+)</text>
        <dbReference type="Rhea" id="RHEA:18245"/>
        <dbReference type="ChEBI" id="CHEBI:15378"/>
        <dbReference type="ChEBI" id="CHEBI:30616"/>
        <dbReference type="ChEBI" id="CHEBI:57287"/>
        <dbReference type="ChEBI" id="CHEBI:57328"/>
        <dbReference type="ChEBI" id="CHEBI:456216"/>
        <dbReference type="EC" id="2.7.1.24"/>
    </reaction>
</comment>
<comment type="pathway">
    <text evidence="1">Cofactor biosynthesis; coenzyme A biosynthesis; CoA from (R)-pantothenate: step 5/5.</text>
</comment>
<comment type="subcellular location">
    <subcellularLocation>
        <location evidence="1">Cytoplasm</location>
    </subcellularLocation>
</comment>
<comment type="similarity">
    <text evidence="1 2">Belongs to the CoaE family.</text>
</comment>
<comment type="sequence caution" evidence="2">
    <conflict type="erroneous initiation">
        <sequence resource="EMBL-CDS" id="AAC43467"/>
    </conflict>
</comment>
<evidence type="ECO:0000255" key="1">
    <source>
        <dbReference type="HAMAP-Rule" id="MF_00376"/>
    </source>
</evidence>
<evidence type="ECO:0000305" key="2"/>